<feature type="chain" id="PRO_0000329252" description="Phosphate acyltransferase">
    <location>
        <begin position="1"/>
        <end position="336"/>
    </location>
</feature>
<protein>
    <recommendedName>
        <fullName evidence="1">Phosphate acyltransferase</fullName>
        <ecNumber evidence="1">2.3.1.274</ecNumber>
    </recommendedName>
    <alternativeName>
        <fullName evidence="1">Acyl-ACP phosphotransacylase</fullName>
    </alternativeName>
    <alternativeName>
        <fullName evidence="1">Acyl-[acyl-carrier-protein]--phosphate acyltransferase</fullName>
    </alternativeName>
    <alternativeName>
        <fullName evidence="1">Phosphate-acyl-ACP acyltransferase</fullName>
    </alternativeName>
</protein>
<name>PLSX_PSEAB</name>
<comment type="function">
    <text evidence="1">Catalyzes the reversible formation of acyl-phosphate (acyl-PO(4)) from acyl-[acyl-carrier-protein] (acyl-ACP). This enzyme utilizes acyl-ACP as fatty acyl donor, but not acyl-CoA.</text>
</comment>
<comment type="catalytic activity">
    <reaction evidence="1">
        <text>a fatty acyl-[ACP] + phosphate = an acyl phosphate + holo-[ACP]</text>
        <dbReference type="Rhea" id="RHEA:42292"/>
        <dbReference type="Rhea" id="RHEA-COMP:9685"/>
        <dbReference type="Rhea" id="RHEA-COMP:14125"/>
        <dbReference type="ChEBI" id="CHEBI:43474"/>
        <dbReference type="ChEBI" id="CHEBI:59918"/>
        <dbReference type="ChEBI" id="CHEBI:64479"/>
        <dbReference type="ChEBI" id="CHEBI:138651"/>
        <dbReference type="EC" id="2.3.1.274"/>
    </reaction>
</comment>
<comment type="pathway">
    <text evidence="1">Lipid metabolism; phospholipid metabolism.</text>
</comment>
<comment type="subunit">
    <text evidence="1">Homodimer. Probably interacts with PlsY.</text>
</comment>
<comment type="subcellular location">
    <subcellularLocation>
        <location evidence="1">Cytoplasm</location>
    </subcellularLocation>
    <text evidence="1">Associated with the membrane possibly through PlsY.</text>
</comment>
<comment type="similarity">
    <text evidence="1">Belongs to the PlsX family.</text>
</comment>
<comment type="sequence caution" evidence="2">
    <conflict type="erroneous initiation">
        <sequence resource="EMBL-CDS" id="ABJ12207"/>
    </conflict>
</comment>
<evidence type="ECO:0000255" key="1">
    <source>
        <dbReference type="HAMAP-Rule" id="MF_00019"/>
    </source>
</evidence>
<evidence type="ECO:0000305" key="2"/>
<keyword id="KW-0963">Cytoplasm</keyword>
<keyword id="KW-0444">Lipid biosynthesis</keyword>
<keyword id="KW-0443">Lipid metabolism</keyword>
<keyword id="KW-0594">Phospholipid biosynthesis</keyword>
<keyword id="KW-1208">Phospholipid metabolism</keyword>
<keyword id="KW-0808">Transferase</keyword>
<reference key="1">
    <citation type="journal article" date="2006" name="Genome Biol.">
        <title>Genomic analysis reveals that Pseudomonas aeruginosa virulence is combinatorial.</title>
        <authorList>
            <person name="Lee D.G."/>
            <person name="Urbach J.M."/>
            <person name="Wu G."/>
            <person name="Liberati N.T."/>
            <person name="Feinbaum R.L."/>
            <person name="Miyata S."/>
            <person name="Diggins L.T."/>
            <person name="He J."/>
            <person name="Saucier M."/>
            <person name="Deziel E."/>
            <person name="Friedman L."/>
            <person name="Li L."/>
            <person name="Grills G."/>
            <person name="Montgomery K."/>
            <person name="Kucherlapati R."/>
            <person name="Rahme L.G."/>
            <person name="Ausubel F.M."/>
        </authorList>
    </citation>
    <scope>NUCLEOTIDE SEQUENCE [LARGE SCALE GENOMIC DNA]</scope>
    <source>
        <strain>UCBPP-PA14</strain>
    </source>
</reference>
<gene>
    <name evidence="1" type="primary">plsX</name>
    <name type="ordered locus">PA14_25640</name>
</gene>
<organism>
    <name type="scientific">Pseudomonas aeruginosa (strain UCBPP-PA14)</name>
    <dbReference type="NCBI Taxonomy" id="208963"/>
    <lineage>
        <taxon>Bacteria</taxon>
        <taxon>Pseudomonadati</taxon>
        <taxon>Pseudomonadota</taxon>
        <taxon>Gammaproteobacteria</taxon>
        <taxon>Pseudomonadales</taxon>
        <taxon>Pseudomonadaceae</taxon>
        <taxon>Pseudomonas</taxon>
    </lineage>
</organism>
<accession>Q02PD2</accession>
<dbReference type="EC" id="2.3.1.274" evidence="1"/>
<dbReference type="EMBL" id="CP000438">
    <property type="protein sequence ID" value="ABJ12207.1"/>
    <property type="status" value="ALT_INIT"/>
    <property type="molecule type" value="Genomic_DNA"/>
</dbReference>
<dbReference type="RefSeq" id="WP_071533934.1">
    <property type="nucleotide sequence ID" value="NZ_CP034244.1"/>
</dbReference>
<dbReference type="SMR" id="Q02PD2"/>
<dbReference type="KEGG" id="pau:PA14_25640"/>
<dbReference type="PseudoCAP" id="PA14_25640"/>
<dbReference type="HOGENOM" id="CLU_039379_1_0_6"/>
<dbReference type="BioCyc" id="PAER208963:G1G74-2140-MONOMER"/>
<dbReference type="UniPathway" id="UPA00085"/>
<dbReference type="Proteomes" id="UP000000653">
    <property type="component" value="Chromosome"/>
</dbReference>
<dbReference type="GO" id="GO:0005737">
    <property type="term" value="C:cytoplasm"/>
    <property type="evidence" value="ECO:0007669"/>
    <property type="project" value="UniProtKB-SubCell"/>
</dbReference>
<dbReference type="GO" id="GO:0043811">
    <property type="term" value="F:phosphate:acyl-[acyl carrier protein] acyltransferase activity"/>
    <property type="evidence" value="ECO:0007669"/>
    <property type="project" value="UniProtKB-UniRule"/>
</dbReference>
<dbReference type="GO" id="GO:0006633">
    <property type="term" value="P:fatty acid biosynthetic process"/>
    <property type="evidence" value="ECO:0007669"/>
    <property type="project" value="UniProtKB-UniRule"/>
</dbReference>
<dbReference type="GO" id="GO:0008654">
    <property type="term" value="P:phospholipid biosynthetic process"/>
    <property type="evidence" value="ECO:0007669"/>
    <property type="project" value="UniProtKB-KW"/>
</dbReference>
<dbReference type="Gene3D" id="3.40.718.10">
    <property type="entry name" value="Isopropylmalate Dehydrogenase"/>
    <property type="match status" value="1"/>
</dbReference>
<dbReference type="HAMAP" id="MF_00019">
    <property type="entry name" value="PlsX"/>
    <property type="match status" value="1"/>
</dbReference>
<dbReference type="InterPro" id="IPR003664">
    <property type="entry name" value="FA_synthesis"/>
</dbReference>
<dbReference type="InterPro" id="IPR012281">
    <property type="entry name" value="Phospholipid_synth_PlsX-like"/>
</dbReference>
<dbReference type="NCBIfam" id="TIGR00182">
    <property type="entry name" value="plsX"/>
    <property type="match status" value="1"/>
</dbReference>
<dbReference type="PANTHER" id="PTHR30100">
    <property type="entry name" value="FATTY ACID/PHOSPHOLIPID SYNTHESIS PROTEIN PLSX"/>
    <property type="match status" value="1"/>
</dbReference>
<dbReference type="PANTHER" id="PTHR30100:SF1">
    <property type="entry name" value="PHOSPHATE ACYLTRANSFERASE"/>
    <property type="match status" value="1"/>
</dbReference>
<dbReference type="Pfam" id="PF02504">
    <property type="entry name" value="FA_synthesis"/>
    <property type="match status" value="1"/>
</dbReference>
<dbReference type="PIRSF" id="PIRSF002465">
    <property type="entry name" value="Phsphlp_syn_PlsX"/>
    <property type="match status" value="1"/>
</dbReference>
<dbReference type="SUPFAM" id="SSF53659">
    <property type="entry name" value="Isocitrate/Isopropylmalate dehydrogenase-like"/>
    <property type="match status" value="1"/>
</dbReference>
<sequence>MSAPIIAIDAMGGDFGPHCVVPASIAFLAENSSSQLILVGQPALLEELLSRYPSLDRQRLRVHAASEVIGSDERPSQALRGKPDASMRVALELVRDGRAHACVSAGNTGALMALSRHLLKTLPGIDRPAMVTAVPTEKGHCHLLDLGANVDCSAEHLYQFAVMGAVAAEALGCVSPRVALLNVGTEEIKGNQQVKLAASLLQKAQGLNFSGYIEGDGLYRGEADVVVCDGFVGNILLKASEGLAAMVSARIEQRFRDGLAAKLVGALALPLLRRLRGDIAPARYNGASFLGLQGIVVKSHGSAAEEGFQSALRRAALEVRENLPQRLHGRLEHLLL</sequence>
<proteinExistence type="inferred from homology"/>